<organism>
    <name type="scientific">Phaseolus vulgaris</name>
    <name type="common">Kidney bean</name>
    <name type="synonym">French bean</name>
    <dbReference type="NCBI Taxonomy" id="3885"/>
    <lineage>
        <taxon>Eukaryota</taxon>
        <taxon>Viridiplantae</taxon>
        <taxon>Streptophyta</taxon>
        <taxon>Embryophyta</taxon>
        <taxon>Tracheophyta</taxon>
        <taxon>Spermatophyta</taxon>
        <taxon>Magnoliopsida</taxon>
        <taxon>eudicotyledons</taxon>
        <taxon>Gunneridae</taxon>
        <taxon>Pentapetalae</taxon>
        <taxon>rosids</taxon>
        <taxon>fabids</taxon>
        <taxon>Fabales</taxon>
        <taxon>Fabaceae</taxon>
        <taxon>Papilionoideae</taxon>
        <taxon>50 kb inversion clade</taxon>
        <taxon>NPAAA clade</taxon>
        <taxon>indigoferoid/millettioid clade</taxon>
        <taxon>Phaseoleae</taxon>
        <taxon>Phaseolus</taxon>
    </lineage>
</organism>
<feature type="chain" id="PRO_0000362953" description="ATP synthase subunit c, chloroplastic">
    <location>
        <begin position="1"/>
        <end position="81"/>
    </location>
</feature>
<feature type="transmembrane region" description="Helical" evidence="1">
    <location>
        <begin position="3"/>
        <end position="23"/>
    </location>
</feature>
<feature type="transmembrane region" description="Helical" evidence="1">
    <location>
        <begin position="57"/>
        <end position="77"/>
    </location>
</feature>
<feature type="site" description="Reversibly protonated during proton transport" evidence="1">
    <location>
        <position position="61"/>
    </location>
</feature>
<comment type="function">
    <text evidence="1">F(1)F(0) ATP synthase produces ATP from ADP in the presence of a proton or sodium gradient. F-type ATPases consist of two structural domains, F(1) containing the extramembraneous catalytic core and F(0) containing the membrane proton channel, linked together by a central stalk and a peripheral stalk. During catalysis, ATP synthesis in the catalytic domain of F(1) is coupled via a rotary mechanism of the central stalk subunits to proton translocation.</text>
</comment>
<comment type="function">
    <text evidence="1">Key component of the F(0) channel; it plays a direct role in translocation across the membrane. A homomeric c-ring of between 10-14 subunits forms the central stalk rotor element with the F(1) delta and epsilon subunits.</text>
</comment>
<comment type="subunit">
    <text evidence="1">F-type ATPases have 2 components, F(1) - the catalytic core - and F(0) - the membrane proton channel. F(1) has five subunits: alpha(3), beta(3), gamma(1), delta(1), epsilon(1). F(0) has four main subunits: a(1), b(1), b'(1) and c(10-14). The alpha and beta chains form an alternating ring which encloses part of the gamma chain. F(1) is attached to F(0) by a central stalk formed by the gamma and epsilon chains, while a peripheral stalk is formed by the delta, b and b' chains.</text>
</comment>
<comment type="subcellular location">
    <subcellularLocation>
        <location evidence="1">Plastid</location>
        <location evidence="1">Chloroplast thylakoid membrane</location>
        <topology evidence="1">Multi-pass membrane protein</topology>
    </subcellularLocation>
</comment>
<comment type="miscellaneous">
    <text>In plastids the F-type ATPase is also known as CF(1)CF(0).</text>
</comment>
<comment type="similarity">
    <text evidence="1">Belongs to the ATPase C chain family.</text>
</comment>
<protein>
    <recommendedName>
        <fullName evidence="1">ATP synthase subunit c, chloroplastic</fullName>
    </recommendedName>
    <alternativeName>
        <fullName evidence="1">ATP synthase F(0) sector subunit c</fullName>
    </alternativeName>
    <alternativeName>
        <fullName evidence="1">ATPase subunit III</fullName>
    </alternativeName>
    <alternativeName>
        <fullName evidence="1">F-type ATPase subunit c</fullName>
        <shortName evidence="1">F-ATPase subunit c</shortName>
    </alternativeName>
    <alternativeName>
        <fullName evidence="1">Lipid-binding protein</fullName>
    </alternativeName>
</protein>
<reference key="1">
    <citation type="journal article" date="2007" name="BMC Genomics">
        <title>Rapid evolutionary change of common bean (Phaseolus vulgaris L) plastome, and the genomic diversification of legume chloroplasts.</title>
        <authorList>
            <person name="Guo X."/>
            <person name="Castillo-Ramirez S."/>
            <person name="Gonzalez V."/>
            <person name="Bustos P."/>
            <person name="Fernandez-Vazquez J.L."/>
            <person name="Santamaria R.I."/>
            <person name="Arellano J."/>
            <person name="Cevallos M.A."/>
            <person name="Davila G."/>
        </authorList>
    </citation>
    <scope>NUCLEOTIDE SEQUENCE [LARGE SCALE GENOMIC DNA]</scope>
    <source>
        <strain>cv. Negro Jamapa</strain>
    </source>
</reference>
<reference key="2">
    <citation type="submission" date="2007-10" db="EMBL/GenBank/DDBJ databases">
        <title>Complete nucleotide sequence of the plastid genome of the common bean, Phaseolus vulgaris.</title>
        <authorList>
            <person name="Moore M.J."/>
            <person name="Triplett E.W."/>
            <person name="Broughton W.J."/>
            <person name="Soltis P.S."/>
            <person name="Soltis D.E."/>
        </authorList>
    </citation>
    <scope>NUCLEOTIDE SEQUENCE [LARGE SCALE GENOMIC DNA]</scope>
</reference>
<geneLocation type="chloroplast"/>
<accession>A4GGB0</accession>
<sequence>MNPIISAASVIAAGLAVGLASIGPGVGQGTAAGQAVEGIARQPEAEGKIRGTLLLSLAFMEALTIYGLVVALALLFANPFV</sequence>
<proteinExistence type="inferred from homology"/>
<keyword id="KW-0066">ATP synthesis</keyword>
<keyword id="KW-0138">CF(0)</keyword>
<keyword id="KW-0150">Chloroplast</keyword>
<keyword id="KW-0375">Hydrogen ion transport</keyword>
<keyword id="KW-0406">Ion transport</keyword>
<keyword id="KW-0446">Lipid-binding</keyword>
<keyword id="KW-0472">Membrane</keyword>
<keyword id="KW-0934">Plastid</keyword>
<keyword id="KW-0793">Thylakoid</keyword>
<keyword id="KW-0812">Transmembrane</keyword>
<keyword id="KW-1133">Transmembrane helix</keyword>
<keyword id="KW-0813">Transport</keyword>
<name>ATPH_PHAVU</name>
<gene>
    <name evidence="1" type="primary">atpH</name>
</gene>
<evidence type="ECO:0000255" key="1">
    <source>
        <dbReference type="HAMAP-Rule" id="MF_01396"/>
    </source>
</evidence>
<dbReference type="EMBL" id="DQ886273">
    <property type="protein sequence ID" value="ABH88091.1"/>
    <property type="molecule type" value="Genomic_DNA"/>
</dbReference>
<dbReference type="EMBL" id="EU196765">
    <property type="protein sequence ID" value="ABW22777.1"/>
    <property type="molecule type" value="Genomic_DNA"/>
</dbReference>
<dbReference type="RefSeq" id="YP_001122811.1">
    <property type="nucleotide sequence ID" value="NC_009259.1"/>
</dbReference>
<dbReference type="SMR" id="A4GGB0"/>
<dbReference type="GeneID" id="4961797"/>
<dbReference type="KEGG" id="pvu:4961797"/>
<dbReference type="GO" id="GO:0009535">
    <property type="term" value="C:chloroplast thylakoid membrane"/>
    <property type="evidence" value="ECO:0007669"/>
    <property type="project" value="UniProtKB-SubCell"/>
</dbReference>
<dbReference type="GO" id="GO:0045259">
    <property type="term" value="C:proton-transporting ATP synthase complex"/>
    <property type="evidence" value="ECO:0007669"/>
    <property type="project" value="UniProtKB-KW"/>
</dbReference>
<dbReference type="GO" id="GO:0033177">
    <property type="term" value="C:proton-transporting two-sector ATPase complex, proton-transporting domain"/>
    <property type="evidence" value="ECO:0007669"/>
    <property type="project" value="InterPro"/>
</dbReference>
<dbReference type="GO" id="GO:0008289">
    <property type="term" value="F:lipid binding"/>
    <property type="evidence" value="ECO:0007669"/>
    <property type="project" value="UniProtKB-KW"/>
</dbReference>
<dbReference type="GO" id="GO:0046933">
    <property type="term" value="F:proton-transporting ATP synthase activity, rotational mechanism"/>
    <property type="evidence" value="ECO:0007669"/>
    <property type="project" value="UniProtKB-UniRule"/>
</dbReference>
<dbReference type="CDD" id="cd18183">
    <property type="entry name" value="ATP-synt_Fo_c_ATPH"/>
    <property type="match status" value="1"/>
</dbReference>
<dbReference type="FunFam" id="1.20.20.10:FF:000001">
    <property type="entry name" value="ATP synthase subunit c, chloroplastic"/>
    <property type="match status" value="1"/>
</dbReference>
<dbReference type="Gene3D" id="1.20.20.10">
    <property type="entry name" value="F1F0 ATP synthase subunit C"/>
    <property type="match status" value="1"/>
</dbReference>
<dbReference type="HAMAP" id="MF_01396">
    <property type="entry name" value="ATP_synth_c_bact"/>
    <property type="match status" value="1"/>
</dbReference>
<dbReference type="InterPro" id="IPR005953">
    <property type="entry name" value="ATP_synth_csu_bac/chlpt"/>
</dbReference>
<dbReference type="InterPro" id="IPR000454">
    <property type="entry name" value="ATP_synth_F0_csu"/>
</dbReference>
<dbReference type="InterPro" id="IPR020537">
    <property type="entry name" value="ATP_synth_F0_csu_DDCD_BS"/>
</dbReference>
<dbReference type="InterPro" id="IPR038662">
    <property type="entry name" value="ATP_synth_F0_csu_sf"/>
</dbReference>
<dbReference type="InterPro" id="IPR002379">
    <property type="entry name" value="ATPase_proteolipid_c-like_dom"/>
</dbReference>
<dbReference type="InterPro" id="IPR035921">
    <property type="entry name" value="F/V-ATP_Csub_sf"/>
</dbReference>
<dbReference type="NCBIfam" id="TIGR01260">
    <property type="entry name" value="ATP_synt_c"/>
    <property type="match status" value="1"/>
</dbReference>
<dbReference type="NCBIfam" id="NF005608">
    <property type="entry name" value="PRK07354.1"/>
    <property type="match status" value="1"/>
</dbReference>
<dbReference type="PANTHER" id="PTHR10031">
    <property type="entry name" value="ATP SYNTHASE LIPID-BINDING PROTEIN, MITOCHONDRIAL"/>
    <property type="match status" value="1"/>
</dbReference>
<dbReference type="PANTHER" id="PTHR10031:SF0">
    <property type="entry name" value="ATPASE PROTEIN 9"/>
    <property type="match status" value="1"/>
</dbReference>
<dbReference type="Pfam" id="PF00137">
    <property type="entry name" value="ATP-synt_C"/>
    <property type="match status" value="1"/>
</dbReference>
<dbReference type="PRINTS" id="PR00124">
    <property type="entry name" value="ATPASEC"/>
</dbReference>
<dbReference type="SUPFAM" id="SSF81333">
    <property type="entry name" value="F1F0 ATP synthase subunit C"/>
    <property type="match status" value="1"/>
</dbReference>
<dbReference type="PROSITE" id="PS00605">
    <property type="entry name" value="ATPASE_C"/>
    <property type="match status" value="1"/>
</dbReference>